<reference key="1">
    <citation type="journal article" date="2007" name="PLoS Genet.">
        <title>Genome analysis of Minibacterium massiliensis highlights the convergent evolution of water-living bacteria.</title>
        <authorList>
            <person name="Audic S."/>
            <person name="Robert C."/>
            <person name="Campagna B."/>
            <person name="Parinello H."/>
            <person name="Claverie J.-M."/>
            <person name="Raoult D."/>
            <person name="Drancourt M."/>
        </authorList>
    </citation>
    <scope>NUCLEOTIDE SEQUENCE [LARGE SCALE GENOMIC DNA]</scope>
    <source>
        <strain>Marseille</strain>
    </source>
</reference>
<protein>
    <recommendedName>
        <fullName evidence="1">Formate-dependent phosphoribosylglycinamide formyltransferase</fullName>
        <ecNumber evidence="1">6.3.1.21</ecNumber>
    </recommendedName>
    <alternativeName>
        <fullName evidence="1">5'-phosphoribosylglycinamide transformylase 2</fullName>
    </alternativeName>
    <alternativeName>
        <fullName evidence="1">Formate-dependent GAR transformylase</fullName>
    </alternativeName>
    <alternativeName>
        <fullName evidence="1">GAR transformylase 2</fullName>
        <shortName evidence="1">GART 2</shortName>
    </alternativeName>
    <alternativeName>
        <fullName evidence="1">Non-folate glycinamide ribonucleotide transformylase</fullName>
    </alternativeName>
    <alternativeName>
        <fullName evidence="1">Phosphoribosylglycinamide formyltransferase 2</fullName>
    </alternativeName>
</protein>
<evidence type="ECO:0000255" key="1">
    <source>
        <dbReference type="HAMAP-Rule" id="MF_01643"/>
    </source>
</evidence>
<dbReference type="EC" id="6.3.1.21" evidence="1"/>
<dbReference type="EMBL" id="CP000269">
    <property type="protein sequence ID" value="ABR89466.1"/>
    <property type="molecule type" value="Genomic_DNA"/>
</dbReference>
<dbReference type="RefSeq" id="WP_012079847.1">
    <property type="nucleotide sequence ID" value="NC_009659.1"/>
</dbReference>
<dbReference type="SMR" id="A6SZI7"/>
<dbReference type="STRING" id="375286.mma_1994"/>
<dbReference type="KEGG" id="mms:mma_1994"/>
<dbReference type="eggNOG" id="COG0027">
    <property type="taxonomic scope" value="Bacteria"/>
</dbReference>
<dbReference type="HOGENOM" id="CLU_011534_1_3_4"/>
<dbReference type="OrthoDB" id="9804625at2"/>
<dbReference type="UniPathway" id="UPA00074">
    <property type="reaction ID" value="UER00127"/>
</dbReference>
<dbReference type="Proteomes" id="UP000006388">
    <property type="component" value="Chromosome"/>
</dbReference>
<dbReference type="GO" id="GO:0005829">
    <property type="term" value="C:cytosol"/>
    <property type="evidence" value="ECO:0007669"/>
    <property type="project" value="TreeGrafter"/>
</dbReference>
<dbReference type="GO" id="GO:0005524">
    <property type="term" value="F:ATP binding"/>
    <property type="evidence" value="ECO:0007669"/>
    <property type="project" value="UniProtKB-UniRule"/>
</dbReference>
<dbReference type="GO" id="GO:0000287">
    <property type="term" value="F:magnesium ion binding"/>
    <property type="evidence" value="ECO:0007669"/>
    <property type="project" value="InterPro"/>
</dbReference>
<dbReference type="GO" id="GO:0043815">
    <property type="term" value="F:phosphoribosylglycinamide formyltransferase 2 activity"/>
    <property type="evidence" value="ECO:0007669"/>
    <property type="project" value="UniProtKB-UniRule"/>
</dbReference>
<dbReference type="GO" id="GO:0004644">
    <property type="term" value="F:phosphoribosylglycinamide formyltransferase activity"/>
    <property type="evidence" value="ECO:0007669"/>
    <property type="project" value="InterPro"/>
</dbReference>
<dbReference type="GO" id="GO:0006189">
    <property type="term" value="P:'de novo' IMP biosynthetic process"/>
    <property type="evidence" value="ECO:0007669"/>
    <property type="project" value="UniProtKB-UniRule"/>
</dbReference>
<dbReference type="Gene3D" id="3.40.50.20">
    <property type="match status" value="1"/>
</dbReference>
<dbReference type="Gene3D" id="3.30.1490.20">
    <property type="entry name" value="ATP-grasp fold, A domain"/>
    <property type="match status" value="1"/>
</dbReference>
<dbReference type="Gene3D" id="3.30.470.20">
    <property type="entry name" value="ATP-grasp fold, B domain"/>
    <property type="match status" value="1"/>
</dbReference>
<dbReference type="HAMAP" id="MF_01643">
    <property type="entry name" value="PurT"/>
    <property type="match status" value="1"/>
</dbReference>
<dbReference type="InterPro" id="IPR011761">
    <property type="entry name" value="ATP-grasp"/>
</dbReference>
<dbReference type="InterPro" id="IPR003135">
    <property type="entry name" value="ATP-grasp_carboxylate-amine"/>
</dbReference>
<dbReference type="InterPro" id="IPR013815">
    <property type="entry name" value="ATP_grasp_subdomain_1"/>
</dbReference>
<dbReference type="InterPro" id="IPR016185">
    <property type="entry name" value="PreATP-grasp_dom_sf"/>
</dbReference>
<dbReference type="InterPro" id="IPR005862">
    <property type="entry name" value="PurT"/>
</dbReference>
<dbReference type="InterPro" id="IPR054350">
    <property type="entry name" value="PurT/PurK_preATP-grasp"/>
</dbReference>
<dbReference type="InterPro" id="IPR048740">
    <property type="entry name" value="PurT_C"/>
</dbReference>
<dbReference type="InterPro" id="IPR011054">
    <property type="entry name" value="Rudment_hybrid_motif"/>
</dbReference>
<dbReference type="NCBIfam" id="NF006766">
    <property type="entry name" value="PRK09288.1"/>
    <property type="match status" value="1"/>
</dbReference>
<dbReference type="NCBIfam" id="TIGR01142">
    <property type="entry name" value="purT"/>
    <property type="match status" value="1"/>
</dbReference>
<dbReference type="PANTHER" id="PTHR43055">
    <property type="entry name" value="FORMATE-DEPENDENT PHOSPHORIBOSYLGLYCINAMIDE FORMYLTRANSFERASE"/>
    <property type="match status" value="1"/>
</dbReference>
<dbReference type="PANTHER" id="PTHR43055:SF1">
    <property type="entry name" value="FORMATE-DEPENDENT PHOSPHORIBOSYLGLYCINAMIDE FORMYLTRANSFERASE"/>
    <property type="match status" value="1"/>
</dbReference>
<dbReference type="Pfam" id="PF02222">
    <property type="entry name" value="ATP-grasp"/>
    <property type="match status" value="1"/>
</dbReference>
<dbReference type="Pfam" id="PF21244">
    <property type="entry name" value="PurT_C"/>
    <property type="match status" value="1"/>
</dbReference>
<dbReference type="Pfam" id="PF22660">
    <property type="entry name" value="RS_preATP-grasp-like"/>
    <property type="match status" value="1"/>
</dbReference>
<dbReference type="SUPFAM" id="SSF56059">
    <property type="entry name" value="Glutathione synthetase ATP-binding domain-like"/>
    <property type="match status" value="1"/>
</dbReference>
<dbReference type="SUPFAM" id="SSF52440">
    <property type="entry name" value="PreATP-grasp domain"/>
    <property type="match status" value="1"/>
</dbReference>
<dbReference type="SUPFAM" id="SSF51246">
    <property type="entry name" value="Rudiment single hybrid motif"/>
    <property type="match status" value="1"/>
</dbReference>
<dbReference type="PROSITE" id="PS50975">
    <property type="entry name" value="ATP_GRASP"/>
    <property type="match status" value="1"/>
</dbReference>
<organism>
    <name type="scientific">Janthinobacterium sp. (strain Marseille)</name>
    <name type="common">Minibacterium massiliensis</name>
    <dbReference type="NCBI Taxonomy" id="375286"/>
    <lineage>
        <taxon>Bacteria</taxon>
        <taxon>Pseudomonadati</taxon>
        <taxon>Pseudomonadota</taxon>
        <taxon>Betaproteobacteria</taxon>
        <taxon>Burkholderiales</taxon>
        <taxon>Oxalobacteraceae</taxon>
        <taxon>Janthinobacterium</taxon>
    </lineage>
</organism>
<comment type="function">
    <text evidence="1">Involved in the de novo purine biosynthesis. Catalyzes the transfer of formate to 5-phospho-ribosyl-glycinamide (GAR), producing 5-phospho-ribosyl-N-formylglycinamide (FGAR). Formate is provided by PurU via hydrolysis of 10-formyl-tetrahydrofolate.</text>
</comment>
<comment type="catalytic activity">
    <reaction evidence="1">
        <text>N(1)-(5-phospho-beta-D-ribosyl)glycinamide + formate + ATP = N(2)-formyl-N(1)-(5-phospho-beta-D-ribosyl)glycinamide + ADP + phosphate + H(+)</text>
        <dbReference type="Rhea" id="RHEA:24829"/>
        <dbReference type="ChEBI" id="CHEBI:15378"/>
        <dbReference type="ChEBI" id="CHEBI:15740"/>
        <dbReference type="ChEBI" id="CHEBI:30616"/>
        <dbReference type="ChEBI" id="CHEBI:43474"/>
        <dbReference type="ChEBI" id="CHEBI:143788"/>
        <dbReference type="ChEBI" id="CHEBI:147286"/>
        <dbReference type="ChEBI" id="CHEBI:456216"/>
        <dbReference type="EC" id="6.3.1.21"/>
    </reaction>
    <physiologicalReaction direction="left-to-right" evidence="1">
        <dbReference type="Rhea" id="RHEA:24830"/>
    </physiologicalReaction>
</comment>
<comment type="pathway">
    <text evidence="1">Purine metabolism; IMP biosynthesis via de novo pathway; N(2)-formyl-N(1)-(5-phospho-D-ribosyl)glycinamide from N(1)-(5-phospho-D-ribosyl)glycinamide (formate route): step 1/1.</text>
</comment>
<comment type="subunit">
    <text evidence="1">Homodimer.</text>
</comment>
<comment type="similarity">
    <text evidence="1">Belongs to the PurK/PurT family.</text>
</comment>
<gene>
    <name evidence="1" type="primary">purT</name>
    <name type="ordered locus">mma_1994</name>
</gene>
<sequence length="406" mass="43429">MTKSNTINRIGTPLSATATKVMLLGSGELGKEVIISLQRLGVEVIAVDRYSNAPGHQVAHRSYVIDMTDEVALAELINQEKPDLIVPEIEAIATAKLVELENAGTIRVIPTARAAWLTMDREGIRRLAAEELGCATSPYRFADNLKELQAGCAEIGFPCIVKPVMSSSGKGQSKLSSSADVAAAWDCAAAGGRVDSGRVIVEGFIDFEYEITLLTVRAIGADGEVHTHFCEPIGHVQVNGDYVESWQPQRMHPGALQKAHEIAKRVTDNLGGLGLFGVELFVKDDMVWFSEVSPRPHDTGMVTMASQEQSEFELHAKAILGLPVNVALSTPAASAVIYGRHDGKVVSFEGVAEALHIPGTDIRLFGKPESFARRRMGVALAKAADVDTARKNAKAAAAKVNPVVSS</sequence>
<accession>A6SZI7</accession>
<name>PURT_JANMA</name>
<keyword id="KW-0067">ATP-binding</keyword>
<keyword id="KW-0436">Ligase</keyword>
<keyword id="KW-0460">Magnesium</keyword>
<keyword id="KW-0479">Metal-binding</keyword>
<keyword id="KW-0547">Nucleotide-binding</keyword>
<keyword id="KW-0658">Purine biosynthesis</keyword>
<proteinExistence type="inferred from homology"/>
<feature type="chain" id="PRO_0000319179" description="Formate-dependent phosphoribosylglycinamide formyltransferase">
    <location>
        <begin position="1"/>
        <end position="406"/>
    </location>
</feature>
<feature type="domain" description="ATP-grasp" evidence="1">
    <location>
        <begin position="126"/>
        <end position="320"/>
    </location>
</feature>
<feature type="binding site" evidence="1">
    <location>
        <begin position="28"/>
        <end position="29"/>
    </location>
    <ligand>
        <name>N(1)-(5-phospho-beta-D-ribosyl)glycinamide</name>
        <dbReference type="ChEBI" id="CHEBI:143788"/>
    </ligand>
</feature>
<feature type="binding site" evidence="1">
    <location>
        <position position="88"/>
    </location>
    <ligand>
        <name>N(1)-(5-phospho-beta-D-ribosyl)glycinamide</name>
        <dbReference type="ChEBI" id="CHEBI:143788"/>
    </ligand>
</feature>
<feature type="binding site" evidence="1">
    <location>
        <position position="121"/>
    </location>
    <ligand>
        <name>ATP</name>
        <dbReference type="ChEBI" id="CHEBI:30616"/>
    </ligand>
</feature>
<feature type="binding site" evidence="1">
    <location>
        <position position="162"/>
    </location>
    <ligand>
        <name>ATP</name>
        <dbReference type="ChEBI" id="CHEBI:30616"/>
    </ligand>
</feature>
<feature type="binding site" evidence="1">
    <location>
        <begin position="167"/>
        <end position="172"/>
    </location>
    <ligand>
        <name>ATP</name>
        <dbReference type="ChEBI" id="CHEBI:30616"/>
    </ligand>
</feature>
<feature type="binding site" evidence="1">
    <location>
        <begin position="202"/>
        <end position="205"/>
    </location>
    <ligand>
        <name>ATP</name>
        <dbReference type="ChEBI" id="CHEBI:30616"/>
    </ligand>
</feature>
<feature type="binding site" evidence="1">
    <location>
        <position position="210"/>
    </location>
    <ligand>
        <name>ATP</name>
        <dbReference type="ChEBI" id="CHEBI:30616"/>
    </ligand>
</feature>
<feature type="binding site" evidence="1">
    <location>
        <position position="279"/>
    </location>
    <ligand>
        <name>Mg(2+)</name>
        <dbReference type="ChEBI" id="CHEBI:18420"/>
    </ligand>
</feature>
<feature type="binding site" evidence="1">
    <location>
        <position position="291"/>
    </location>
    <ligand>
        <name>Mg(2+)</name>
        <dbReference type="ChEBI" id="CHEBI:18420"/>
    </ligand>
</feature>
<feature type="binding site" evidence="1">
    <location>
        <position position="298"/>
    </location>
    <ligand>
        <name>N(1)-(5-phospho-beta-D-ribosyl)glycinamide</name>
        <dbReference type="ChEBI" id="CHEBI:143788"/>
    </ligand>
</feature>
<feature type="binding site" evidence="1">
    <location>
        <position position="367"/>
    </location>
    <ligand>
        <name>N(1)-(5-phospho-beta-D-ribosyl)glycinamide</name>
        <dbReference type="ChEBI" id="CHEBI:143788"/>
    </ligand>
</feature>
<feature type="binding site" evidence="1">
    <location>
        <begin position="374"/>
        <end position="375"/>
    </location>
    <ligand>
        <name>N(1)-(5-phospho-beta-D-ribosyl)glycinamide</name>
        <dbReference type="ChEBI" id="CHEBI:143788"/>
    </ligand>
</feature>